<evidence type="ECO:0000255" key="1">
    <source>
        <dbReference type="HAMAP-Rule" id="MF_00115"/>
    </source>
</evidence>
<dbReference type="EMBL" id="CP001052">
    <property type="protein sequence ID" value="ACD16279.1"/>
    <property type="molecule type" value="Genomic_DNA"/>
</dbReference>
<dbReference type="RefSeq" id="WP_012432882.1">
    <property type="nucleotide sequence ID" value="NC_010681.1"/>
</dbReference>
<dbReference type="STRING" id="398527.Bphyt_1871"/>
<dbReference type="KEGG" id="bpy:Bphyt_1871"/>
<dbReference type="eggNOG" id="COG1970">
    <property type="taxonomic scope" value="Bacteria"/>
</dbReference>
<dbReference type="HOGENOM" id="CLU_095787_0_1_4"/>
<dbReference type="OrthoDB" id="9810350at2"/>
<dbReference type="Proteomes" id="UP000001739">
    <property type="component" value="Chromosome 1"/>
</dbReference>
<dbReference type="GO" id="GO:0005886">
    <property type="term" value="C:plasma membrane"/>
    <property type="evidence" value="ECO:0007669"/>
    <property type="project" value="UniProtKB-SubCell"/>
</dbReference>
<dbReference type="GO" id="GO:0008381">
    <property type="term" value="F:mechanosensitive monoatomic ion channel activity"/>
    <property type="evidence" value="ECO:0007669"/>
    <property type="project" value="UniProtKB-UniRule"/>
</dbReference>
<dbReference type="Gene3D" id="1.10.1200.120">
    <property type="entry name" value="Large-conductance mechanosensitive channel, MscL, domain 1"/>
    <property type="match status" value="1"/>
</dbReference>
<dbReference type="HAMAP" id="MF_00115">
    <property type="entry name" value="MscL"/>
    <property type="match status" value="1"/>
</dbReference>
<dbReference type="InterPro" id="IPR019823">
    <property type="entry name" value="Mechanosensitive_channel_CS"/>
</dbReference>
<dbReference type="InterPro" id="IPR001185">
    <property type="entry name" value="MS_channel"/>
</dbReference>
<dbReference type="InterPro" id="IPR037673">
    <property type="entry name" value="MSC/AndL"/>
</dbReference>
<dbReference type="InterPro" id="IPR036019">
    <property type="entry name" value="MscL_channel"/>
</dbReference>
<dbReference type="NCBIfam" id="TIGR00220">
    <property type="entry name" value="mscL"/>
    <property type="match status" value="1"/>
</dbReference>
<dbReference type="NCBIfam" id="NF001843">
    <property type="entry name" value="PRK00567.1-4"/>
    <property type="match status" value="1"/>
</dbReference>
<dbReference type="NCBIfam" id="NF010557">
    <property type="entry name" value="PRK13952.1"/>
    <property type="match status" value="1"/>
</dbReference>
<dbReference type="PANTHER" id="PTHR30266:SF2">
    <property type="entry name" value="LARGE-CONDUCTANCE MECHANOSENSITIVE CHANNEL"/>
    <property type="match status" value="1"/>
</dbReference>
<dbReference type="PANTHER" id="PTHR30266">
    <property type="entry name" value="MECHANOSENSITIVE CHANNEL MSCL"/>
    <property type="match status" value="1"/>
</dbReference>
<dbReference type="Pfam" id="PF01741">
    <property type="entry name" value="MscL"/>
    <property type="match status" value="1"/>
</dbReference>
<dbReference type="PRINTS" id="PR01264">
    <property type="entry name" value="MECHCHANNEL"/>
</dbReference>
<dbReference type="SUPFAM" id="SSF81330">
    <property type="entry name" value="Gated mechanosensitive channel"/>
    <property type="match status" value="1"/>
</dbReference>
<dbReference type="PROSITE" id="PS01327">
    <property type="entry name" value="MSCL"/>
    <property type="match status" value="1"/>
</dbReference>
<proteinExistence type="inferred from homology"/>
<keyword id="KW-0997">Cell inner membrane</keyword>
<keyword id="KW-1003">Cell membrane</keyword>
<keyword id="KW-0407">Ion channel</keyword>
<keyword id="KW-0406">Ion transport</keyword>
<keyword id="KW-0472">Membrane</keyword>
<keyword id="KW-0812">Transmembrane</keyword>
<keyword id="KW-1133">Transmembrane helix</keyword>
<keyword id="KW-0813">Transport</keyword>
<protein>
    <recommendedName>
        <fullName evidence="1">Large-conductance mechanosensitive channel</fullName>
    </recommendedName>
</protein>
<gene>
    <name evidence="1" type="primary">mscL</name>
    <name type="ordered locus">Bphyt_1871</name>
</gene>
<feature type="chain" id="PRO_1000094886" description="Large-conductance mechanosensitive channel">
    <location>
        <begin position="1"/>
        <end position="148"/>
    </location>
</feature>
<feature type="transmembrane region" description="Helical" evidence="1">
    <location>
        <begin position="16"/>
        <end position="36"/>
    </location>
</feature>
<feature type="transmembrane region" description="Helical" evidence="1">
    <location>
        <begin position="89"/>
        <end position="109"/>
    </location>
</feature>
<reference key="1">
    <citation type="journal article" date="2011" name="J. Bacteriol.">
        <title>Complete genome sequence of the plant growth-promoting endophyte Burkholderia phytofirmans strain PsJN.</title>
        <authorList>
            <person name="Weilharter A."/>
            <person name="Mitter B."/>
            <person name="Shin M.V."/>
            <person name="Chain P.S."/>
            <person name="Nowak J."/>
            <person name="Sessitsch A."/>
        </authorList>
    </citation>
    <scope>NUCLEOTIDE SEQUENCE [LARGE SCALE GENOMIC DNA]</scope>
    <source>
        <strain>DSM 17436 / LMG 22146 / PsJN</strain>
    </source>
</reference>
<name>MSCL_PARPJ</name>
<sequence>MSMVKEFKEFALKGNVMDLAVGVIIGGAFSTIVNSIVKDLIMPVVGLATGGLDFSNKFVRLGPIPPTFKGSPESYKDLQTAGVAVFGYGSFITVLINFLILAFIIFLMVKFINNLRKPAEAAPAAPPPPPEDVLLLREIRDSLKNSPR</sequence>
<organism>
    <name type="scientific">Paraburkholderia phytofirmans (strain DSM 17436 / LMG 22146 / PsJN)</name>
    <name type="common">Burkholderia phytofirmans</name>
    <dbReference type="NCBI Taxonomy" id="398527"/>
    <lineage>
        <taxon>Bacteria</taxon>
        <taxon>Pseudomonadati</taxon>
        <taxon>Pseudomonadota</taxon>
        <taxon>Betaproteobacteria</taxon>
        <taxon>Burkholderiales</taxon>
        <taxon>Burkholderiaceae</taxon>
        <taxon>Paraburkholderia</taxon>
    </lineage>
</organism>
<accession>B2T3W8</accession>
<comment type="function">
    <text evidence="1">Channel that opens in response to stretch forces in the membrane lipid bilayer. May participate in the regulation of osmotic pressure changes within the cell.</text>
</comment>
<comment type="subunit">
    <text evidence="1">Homopentamer.</text>
</comment>
<comment type="subcellular location">
    <subcellularLocation>
        <location evidence="1">Cell inner membrane</location>
        <topology evidence="1">Multi-pass membrane protein</topology>
    </subcellularLocation>
</comment>
<comment type="similarity">
    <text evidence="1">Belongs to the MscL family.</text>
</comment>